<feature type="chain" id="PRO_1000212097" description="UDP-2,3-diacylglucosamine hydrolase">
    <location>
        <begin position="1"/>
        <end position="246"/>
    </location>
</feature>
<feature type="binding site" evidence="1">
    <location>
        <position position="8"/>
    </location>
    <ligand>
        <name>Mn(2+)</name>
        <dbReference type="ChEBI" id="CHEBI:29035"/>
        <label>1</label>
    </ligand>
</feature>
<feature type="binding site" evidence="1">
    <location>
        <position position="10"/>
    </location>
    <ligand>
        <name>Mn(2+)</name>
        <dbReference type="ChEBI" id="CHEBI:29035"/>
        <label>1</label>
    </ligand>
</feature>
<feature type="binding site" evidence="1">
    <location>
        <position position="41"/>
    </location>
    <ligand>
        <name>Mn(2+)</name>
        <dbReference type="ChEBI" id="CHEBI:29035"/>
        <label>1</label>
    </ligand>
</feature>
<feature type="binding site" evidence="1">
    <location>
        <position position="41"/>
    </location>
    <ligand>
        <name>Mn(2+)</name>
        <dbReference type="ChEBI" id="CHEBI:29035"/>
        <label>2</label>
    </ligand>
</feature>
<feature type="binding site" evidence="1">
    <location>
        <begin position="79"/>
        <end position="80"/>
    </location>
    <ligand>
        <name>substrate</name>
    </ligand>
</feature>
<feature type="binding site" evidence="1">
    <location>
        <position position="79"/>
    </location>
    <ligand>
        <name>Mn(2+)</name>
        <dbReference type="ChEBI" id="CHEBI:29035"/>
        <label>2</label>
    </ligand>
</feature>
<feature type="binding site" evidence="1">
    <location>
        <position position="114"/>
    </location>
    <ligand>
        <name>Mn(2+)</name>
        <dbReference type="ChEBI" id="CHEBI:29035"/>
        <label>2</label>
    </ligand>
</feature>
<feature type="binding site" evidence="1">
    <location>
        <position position="122"/>
    </location>
    <ligand>
        <name>substrate</name>
    </ligand>
</feature>
<feature type="binding site" evidence="1">
    <location>
        <position position="160"/>
    </location>
    <ligand>
        <name>substrate</name>
    </ligand>
</feature>
<feature type="binding site" evidence="1">
    <location>
        <position position="164"/>
    </location>
    <ligand>
        <name>substrate</name>
    </ligand>
</feature>
<feature type="binding site" evidence="1">
    <location>
        <position position="167"/>
    </location>
    <ligand>
        <name>substrate</name>
    </ligand>
</feature>
<feature type="binding site" evidence="1">
    <location>
        <position position="195"/>
    </location>
    <ligand>
        <name>Mn(2+)</name>
        <dbReference type="ChEBI" id="CHEBI:29035"/>
        <label>2</label>
    </ligand>
</feature>
<feature type="binding site" evidence="1">
    <location>
        <position position="195"/>
    </location>
    <ligand>
        <name>substrate</name>
    </ligand>
</feature>
<feature type="binding site" evidence="1">
    <location>
        <position position="197"/>
    </location>
    <ligand>
        <name>Mn(2+)</name>
        <dbReference type="ChEBI" id="CHEBI:29035"/>
        <label>1</label>
    </ligand>
</feature>
<accession>C4LG06</accession>
<dbReference type="EC" id="3.6.1.54" evidence="1"/>
<dbReference type="EMBL" id="CP001616">
    <property type="protein sequence ID" value="ACQ93523.1"/>
    <property type="molecule type" value="Genomic_DNA"/>
</dbReference>
<dbReference type="RefSeq" id="WP_015878991.1">
    <property type="nucleotide sequence ID" value="NC_012691.1"/>
</dbReference>
<dbReference type="SMR" id="C4LG06"/>
<dbReference type="STRING" id="595494.Tola_1920"/>
<dbReference type="KEGG" id="tau:Tola_1920"/>
<dbReference type="eggNOG" id="COG2908">
    <property type="taxonomic scope" value="Bacteria"/>
</dbReference>
<dbReference type="HOGENOM" id="CLU_074586_0_0_6"/>
<dbReference type="OrthoDB" id="9783283at2"/>
<dbReference type="UniPathway" id="UPA00359">
    <property type="reaction ID" value="UER00480"/>
</dbReference>
<dbReference type="Proteomes" id="UP000009073">
    <property type="component" value="Chromosome"/>
</dbReference>
<dbReference type="GO" id="GO:0005737">
    <property type="term" value="C:cytoplasm"/>
    <property type="evidence" value="ECO:0007669"/>
    <property type="project" value="InterPro"/>
</dbReference>
<dbReference type="GO" id="GO:0019897">
    <property type="term" value="C:extrinsic component of plasma membrane"/>
    <property type="evidence" value="ECO:0007669"/>
    <property type="project" value="UniProtKB-UniRule"/>
</dbReference>
<dbReference type="GO" id="GO:0030145">
    <property type="term" value="F:manganese ion binding"/>
    <property type="evidence" value="ECO:0007669"/>
    <property type="project" value="UniProtKB-UniRule"/>
</dbReference>
<dbReference type="GO" id="GO:0008758">
    <property type="term" value="F:UDP-2,3-diacylglucosamine hydrolase activity"/>
    <property type="evidence" value="ECO:0007669"/>
    <property type="project" value="UniProtKB-UniRule"/>
</dbReference>
<dbReference type="GO" id="GO:0009245">
    <property type="term" value="P:lipid A biosynthetic process"/>
    <property type="evidence" value="ECO:0007669"/>
    <property type="project" value="UniProtKB-UniRule"/>
</dbReference>
<dbReference type="CDD" id="cd07398">
    <property type="entry name" value="MPP_YbbF-LpxH"/>
    <property type="match status" value="1"/>
</dbReference>
<dbReference type="Gene3D" id="3.60.21.10">
    <property type="match status" value="1"/>
</dbReference>
<dbReference type="HAMAP" id="MF_00575">
    <property type="entry name" value="LpxH"/>
    <property type="match status" value="1"/>
</dbReference>
<dbReference type="InterPro" id="IPR004843">
    <property type="entry name" value="Calcineurin-like_PHP_ApaH"/>
</dbReference>
<dbReference type="InterPro" id="IPR043461">
    <property type="entry name" value="LpxH-like"/>
</dbReference>
<dbReference type="InterPro" id="IPR029052">
    <property type="entry name" value="Metallo-depent_PP-like"/>
</dbReference>
<dbReference type="InterPro" id="IPR010138">
    <property type="entry name" value="UDP-diacylglucosamine_Hdrlase"/>
</dbReference>
<dbReference type="NCBIfam" id="TIGR01854">
    <property type="entry name" value="lipid_A_lpxH"/>
    <property type="match status" value="1"/>
</dbReference>
<dbReference type="NCBIfam" id="NF003743">
    <property type="entry name" value="PRK05340.1"/>
    <property type="match status" value="1"/>
</dbReference>
<dbReference type="PANTHER" id="PTHR34990:SF1">
    <property type="entry name" value="UDP-2,3-DIACYLGLUCOSAMINE HYDROLASE"/>
    <property type="match status" value="1"/>
</dbReference>
<dbReference type="PANTHER" id="PTHR34990">
    <property type="entry name" value="UDP-2,3-DIACYLGLUCOSAMINE HYDROLASE-RELATED"/>
    <property type="match status" value="1"/>
</dbReference>
<dbReference type="Pfam" id="PF00149">
    <property type="entry name" value="Metallophos"/>
    <property type="match status" value="1"/>
</dbReference>
<dbReference type="SUPFAM" id="SSF56300">
    <property type="entry name" value="Metallo-dependent phosphatases"/>
    <property type="match status" value="1"/>
</dbReference>
<keyword id="KW-0997">Cell inner membrane</keyword>
<keyword id="KW-1003">Cell membrane</keyword>
<keyword id="KW-0378">Hydrolase</keyword>
<keyword id="KW-0441">Lipid A biosynthesis</keyword>
<keyword id="KW-0444">Lipid biosynthesis</keyword>
<keyword id="KW-0443">Lipid metabolism</keyword>
<keyword id="KW-0464">Manganese</keyword>
<keyword id="KW-0472">Membrane</keyword>
<keyword id="KW-0479">Metal-binding</keyword>
<keyword id="KW-1185">Reference proteome</keyword>
<name>LPXH_TOLAT</name>
<evidence type="ECO:0000255" key="1">
    <source>
        <dbReference type="HAMAP-Rule" id="MF_00575"/>
    </source>
</evidence>
<proteinExistence type="inferred from homology"/>
<comment type="function">
    <text evidence="1">Hydrolyzes the pyrophosphate bond of UDP-2,3-diacylglucosamine to yield 2,3-diacylglucosamine 1-phosphate (lipid X) and UMP by catalyzing the attack of water at the alpha-P atom. Involved in the biosynthesis of lipid A, a phosphorylated glycolipid that anchors the lipopolysaccharide to the outer membrane of the cell.</text>
</comment>
<comment type="catalytic activity">
    <reaction evidence="1">
        <text>UDP-2-N,3-O-bis[(3R)-3-hydroxytetradecanoyl]-alpha-D-glucosamine + H2O = 2-N,3-O-bis[(3R)-3-hydroxytetradecanoyl]-alpha-D-glucosaminyl 1-phosphate + UMP + 2 H(+)</text>
        <dbReference type="Rhea" id="RHEA:25213"/>
        <dbReference type="ChEBI" id="CHEBI:15377"/>
        <dbReference type="ChEBI" id="CHEBI:15378"/>
        <dbReference type="ChEBI" id="CHEBI:57865"/>
        <dbReference type="ChEBI" id="CHEBI:57957"/>
        <dbReference type="ChEBI" id="CHEBI:78847"/>
        <dbReference type="EC" id="3.6.1.54"/>
    </reaction>
</comment>
<comment type="cofactor">
    <cofactor evidence="1">
        <name>Mn(2+)</name>
        <dbReference type="ChEBI" id="CHEBI:29035"/>
    </cofactor>
    <text evidence="1">Binds 2 Mn(2+) ions per subunit in a binuclear metal center.</text>
</comment>
<comment type="pathway">
    <text evidence="1">Glycolipid biosynthesis; lipid IV(A) biosynthesis; lipid IV(A) from (3R)-3-hydroxytetradecanoyl-[acyl-carrier-protein] and UDP-N-acetyl-alpha-D-glucosamine: step 4/6.</text>
</comment>
<comment type="subcellular location">
    <subcellularLocation>
        <location evidence="1">Cell inner membrane</location>
        <topology evidence="1">Peripheral membrane protein</topology>
        <orientation evidence="1">Cytoplasmic side</orientation>
    </subcellularLocation>
</comment>
<comment type="similarity">
    <text evidence="1">Belongs to the LpxH family.</text>
</comment>
<sequence length="246" mass="28581">MTKLFIADLHLSESRPDLIQAFIHFLETEARTADELYILGDLFEFWIGDDEQSPLQQQITHALRTLANHGCQLFYSHGNRDFMIGKRFAQECGMTLLPPVYPCELAGEKALLLHGDQLCTDDEAYQRFRRITSWPWLQWIFLHLPLSRRVKIAQQIRQGSHKGKQQKSRSIMDVTPQSVITCFEQHKATLMIHGHTHRPQIHDVTLSSNQPARRIVLGDWDTDLWYLKIDDRDINLISQPINTAKN</sequence>
<reference key="1">
    <citation type="submission" date="2009-05" db="EMBL/GenBank/DDBJ databases">
        <title>Complete sequence of Tolumonas auensis DSM 9187.</title>
        <authorList>
            <consortium name="US DOE Joint Genome Institute"/>
            <person name="Lucas S."/>
            <person name="Copeland A."/>
            <person name="Lapidus A."/>
            <person name="Glavina del Rio T."/>
            <person name="Tice H."/>
            <person name="Bruce D."/>
            <person name="Goodwin L."/>
            <person name="Pitluck S."/>
            <person name="Chertkov O."/>
            <person name="Brettin T."/>
            <person name="Detter J.C."/>
            <person name="Han C."/>
            <person name="Larimer F."/>
            <person name="Land M."/>
            <person name="Hauser L."/>
            <person name="Kyrpides N."/>
            <person name="Mikhailova N."/>
            <person name="Spring S."/>
            <person name="Beller H."/>
        </authorList>
    </citation>
    <scope>NUCLEOTIDE SEQUENCE [LARGE SCALE GENOMIC DNA]</scope>
    <source>
        <strain>DSM 9187 / NBRC 110442 / TA 4</strain>
    </source>
</reference>
<gene>
    <name evidence="1" type="primary">lpxH</name>
    <name type="ordered locus">Tola_1920</name>
</gene>
<organism>
    <name type="scientific">Tolumonas auensis (strain DSM 9187 / NBRC 110442 / TA 4)</name>
    <dbReference type="NCBI Taxonomy" id="595494"/>
    <lineage>
        <taxon>Bacteria</taxon>
        <taxon>Pseudomonadati</taxon>
        <taxon>Pseudomonadota</taxon>
        <taxon>Gammaproteobacteria</taxon>
        <taxon>Aeromonadales</taxon>
        <taxon>Aeromonadaceae</taxon>
        <taxon>Tolumonas</taxon>
    </lineage>
</organism>
<protein>
    <recommendedName>
        <fullName evidence="1">UDP-2,3-diacylglucosamine hydrolase</fullName>
        <ecNumber evidence="1">3.6.1.54</ecNumber>
    </recommendedName>
    <alternativeName>
        <fullName evidence="1">UDP-2,3-diacylglucosamine diphosphatase</fullName>
    </alternativeName>
</protein>